<reference key="1">
    <citation type="journal article" date="2003" name="Proc. Natl. Acad. Sci. U.S.A.">
        <title>The complete genome sequence of the Arabidopsis and tomato pathogen Pseudomonas syringae pv. tomato DC3000.</title>
        <authorList>
            <person name="Buell C.R."/>
            <person name="Joardar V."/>
            <person name="Lindeberg M."/>
            <person name="Selengut J."/>
            <person name="Paulsen I.T."/>
            <person name="Gwinn M.L."/>
            <person name="Dodson R.J."/>
            <person name="DeBoy R.T."/>
            <person name="Durkin A.S."/>
            <person name="Kolonay J.F."/>
            <person name="Madupu R."/>
            <person name="Daugherty S.C."/>
            <person name="Brinkac L.M."/>
            <person name="Beanan M.J."/>
            <person name="Haft D.H."/>
            <person name="Nelson W.C."/>
            <person name="Davidsen T.M."/>
            <person name="Zafar N."/>
            <person name="Zhou L."/>
            <person name="Liu J."/>
            <person name="Yuan Q."/>
            <person name="Khouri H.M."/>
            <person name="Fedorova N.B."/>
            <person name="Tran B."/>
            <person name="Russell D."/>
            <person name="Berry K.J."/>
            <person name="Utterback T.R."/>
            <person name="Van Aken S.E."/>
            <person name="Feldblyum T.V."/>
            <person name="D'Ascenzo M."/>
            <person name="Deng W.-L."/>
            <person name="Ramos A.R."/>
            <person name="Alfano J.R."/>
            <person name="Cartinhour S."/>
            <person name="Chatterjee A.K."/>
            <person name="Delaney T.P."/>
            <person name="Lazarowitz S.G."/>
            <person name="Martin G.B."/>
            <person name="Schneider D.J."/>
            <person name="Tang X."/>
            <person name="Bender C.L."/>
            <person name="White O."/>
            <person name="Fraser C.M."/>
            <person name="Collmer A."/>
        </authorList>
    </citation>
    <scope>NUCLEOTIDE SEQUENCE [LARGE SCALE GENOMIC DNA]</scope>
    <source>
        <strain>ATCC BAA-871 / DC3000</strain>
    </source>
</reference>
<comment type="catalytic activity">
    <reaction evidence="1">
        <text>(S)-malate + NAD(+) = pyruvate + CO2 + NADH</text>
        <dbReference type="Rhea" id="RHEA:12653"/>
        <dbReference type="ChEBI" id="CHEBI:15361"/>
        <dbReference type="ChEBI" id="CHEBI:15589"/>
        <dbReference type="ChEBI" id="CHEBI:16526"/>
        <dbReference type="ChEBI" id="CHEBI:57540"/>
        <dbReference type="ChEBI" id="CHEBI:57945"/>
        <dbReference type="EC" id="1.1.1.38"/>
    </reaction>
</comment>
<comment type="catalytic activity">
    <reaction evidence="1">
        <text>oxaloacetate + H(+) = pyruvate + CO2</text>
        <dbReference type="Rhea" id="RHEA:15641"/>
        <dbReference type="ChEBI" id="CHEBI:15361"/>
        <dbReference type="ChEBI" id="CHEBI:15378"/>
        <dbReference type="ChEBI" id="CHEBI:16452"/>
        <dbReference type="ChEBI" id="CHEBI:16526"/>
        <dbReference type="EC" id="1.1.1.38"/>
    </reaction>
</comment>
<comment type="cofactor">
    <cofactor evidence="1">
        <name>Mg(2+)</name>
        <dbReference type="ChEBI" id="CHEBI:18420"/>
    </cofactor>
    <cofactor evidence="1">
        <name>Mn(2+)</name>
        <dbReference type="ChEBI" id="CHEBI:29035"/>
    </cofactor>
    <text evidence="1">Divalent metal cations. Prefers magnesium or manganese.</text>
</comment>
<comment type="subunit">
    <text evidence="1">Homotetramer.</text>
</comment>
<comment type="similarity">
    <text evidence="1">Belongs to the malic enzymes family.</text>
</comment>
<comment type="sequence caution" evidence="2">
    <conflict type="erroneous initiation">
        <sequence resource="EMBL-CDS" id="AAO57390"/>
    </conflict>
</comment>
<sequence length="563" mass="62076">MTTTSRPLYISYAGPSLLEMPLLNKGSAFTPQERIEFNLIGLLPQNVETIEEQVTRVYSQYKQCASDLDKHIYLRSIQDNNETLFFRLLDSHLDEMLPIIYTPTVGQACQEFSKIYRTHRGLFISYPERDRIDDILRSATKDRIKIIVVTDSERILGLGDQGIGGMGIPIGKLSLYTACGGISPAYTLPIVLDVGTNNRELLDDPMYMGWRHERVSGKEYEDFIALFIDAVQRRWPDVLLQFEDFAQSNAMPLLEKYRDELCCFNDDIQGTASVAVGTLLAACKAKNETLGQQKVVFVGAGSAGCGIAEHIIAAMRIEGLSESEARKRIFMVDRFGLLTEGMGNLLDFQLRLAQKSADVAGWTAGTETFPQLLDVVTHAGATVLIGVSGQRGLFTEQVVRELYKHCAKPLVMPLSNPTSKVEATPEEILRWTDGNALVATGSPFAPVEINGRTVHIAQCNNSYIFPGIGLGVVACKASRITDRMLMAASNALAECSPMVTGQGDAVLPPLKEIQQVSRKIALAVAKEAQAEGLALETSEEALLAAIERNFWLPGYRAYRRRSV</sequence>
<protein>
    <recommendedName>
        <fullName evidence="1">NAD-dependent malic enzyme</fullName>
        <shortName evidence="1">NAD-ME</shortName>
        <ecNumber evidence="1">1.1.1.38</ecNumber>
    </recommendedName>
</protein>
<keyword id="KW-0479">Metal-binding</keyword>
<keyword id="KW-0520">NAD</keyword>
<keyword id="KW-0560">Oxidoreductase</keyword>
<keyword id="KW-1185">Reference proteome</keyword>
<proteinExistence type="inferred from homology"/>
<organism>
    <name type="scientific">Pseudomonas syringae pv. tomato (strain ATCC BAA-871 / DC3000)</name>
    <dbReference type="NCBI Taxonomy" id="223283"/>
    <lineage>
        <taxon>Bacteria</taxon>
        <taxon>Pseudomonadati</taxon>
        <taxon>Pseudomonadota</taxon>
        <taxon>Gammaproteobacteria</taxon>
        <taxon>Pseudomonadales</taxon>
        <taxon>Pseudomonadaceae</taxon>
        <taxon>Pseudomonas</taxon>
    </lineage>
</organism>
<accession>Q87Y79</accession>
<feature type="chain" id="PRO_0000160225" description="NAD-dependent malic enzyme">
    <location>
        <begin position="1"/>
        <end position="563"/>
    </location>
</feature>
<feature type="active site" description="Proton donor" evidence="1">
    <location>
        <position position="101"/>
    </location>
</feature>
<feature type="active site" description="Proton acceptor" evidence="1">
    <location>
        <position position="172"/>
    </location>
</feature>
<feature type="binding site" evidence="1">
    <location>
        <position position="154"/>
    </location>
    <ligand>
        <name>NAD(+)</name>
        <dbReference type="ChEBI" id="CHEBI:57540"/>
    </ligand>
</feature>
<feature type="binding site" evidence="1">
    <location>
        <position position="243"/>
    </location>
    <ligand>
        <name>a divalent metal cation</name>
        <dbReference type="ChEBI" id="CHEBI:60240"/>
    </ligand>
</feature>
<feature type="binding site" evidence="1">
    <location>
        <position position="244"/>
    </location>
    <ligand>
        <name>a divalent metal cation</name>
        <dbReference type="ChEBI" id="CHEBI:60240"/>
    </ligand>
</feature>
<feature type="binding site" evidence="1">
    <location>
        <position position="267"/>
    </location>
    <ligand>
        <name>a divalent metal cation</name>
        <dbReference type="ChEBI" id="CHEBI:60240"/>
    </ligand>
</feature>
<feature type="binding site" evidence="1">
    <location>
        <position position="267"/>
    </location>
    <ligand>
        <name>NAD(+)</name>
        <dbReference type="ChEBI" id="CHEBI:57540"/>
    </ligand>
</feature>
<feature type="binding site" evidence="1">
    <location>
        <position position="416"/>
    </location>
    <ligand>
        <name>NAD(+)</name>
        <dbReference type="ChEBI" id="CHEBI:57540"/>
    </ligand>
</feature>
<feature type="site" description="Important for activity" evidence="1">
    <location>
        <position position="267"/>
    </location>
</feature>
<evidence type="ECO:0000255" key="1">
    <source>
        <dbReference type="HAMAP-Rule" id="MF_01619"/>
    </source>
</evidence>
<evidence type="ECO:0000305" key="2"/>
<dbReference type="EC" id="1.1.1.38" evidence="1"/>
<dbReference type="EMBL" id="AE016853">
    <property type="protein sequence ID" value="AAO57390.1"/>
    <property type="status" value="ALT_INIT"/>
    <property type="molecule type" value="Genomic_DNA"/>
</dbReference>
<dbReference type="RefSeq" id="NP_793695.3">
    <property type="nucleotide sequence ID" value="NC_004578.1"/>
</dbReference>
<dbReference type="RefSeq" id="WP_046463461.1">
    <property type="nucleotide sequence ID" value="NC_004578.1"/>
</dbReference>
<dbReference type="SMR" id="Q87Y79"/>
<dbReference type="STRING" id="223283.PSPTO_3924"/>
<dbReference type="GeneID" id="1185597"/>
<dbReference type="KEGG" id="pst:PSPTO_3924"/>
<dbReference type="PATRIC" id="fig|223283.9.peg.4023"/>
<dbReference type="eggNOG" id="COG0281">
    <property type="taxonomic scope" value="Bacteria"/>
</dbReference>
<dbReference type="HOGENOM" id="CLU_011405_5_2_6"/>
<dbReference type="OrthoDB" id="3314528at2"/>
<dbReference type="Proteomes" id="UP000002515">
    <property type="component" value="Chromosome"/>
</dbReference>
<dbReference type="GO" id="GO:0005829">
    <property type="term" value="C:cytosol"/>
    <property type="evidence" value="ECO:0007669"/>
    <property type="project" value="TreeGrafter"/>
</dbReference>
<dbReference type="GO" id="GO:0004471">
    <property type="term" value="F:malate dehydrogenase (decarboxylating) (NAD+) activity"/>
    <property type="evidence" value="ECO:0007669"/>
    <property type="project" value="UniProtKB-UniRule"/>
</dbReference>
<dbReference type="GO" id="GO:0046872">
    <property type="term" value="F:metal ion binding"/>
    <property type="evidence" value="ECO:0007669"/>
    <property type="project" value="UniProtKB-KW"/>
</dbReference>
<dbReference type="GO" id="GO:0051287">
    <property type="term" value="F:NAD binding"/>
    <property type="evidence" value="ECO:0007669"/>
    <property type="project" value="InterPro"/>
</dbReference>
<dbReference type="GO" id="GO:0008948">
    <property type="term" value="F:oxaloacetate decarboxylase activity"/>
    <property type="evidence" value="ECO:0007669"/>
    <property type="project" value="UniProtKB-UniRule"/>
</dbReference>
<dbReference type="GO" id="GO:0006108">
    <property type="term" value="P:malate metabolic process"/>
    <property type="evidence" value="ECO:0007669"/>
    <property type="project" value="TreeGrafter"/>
</dbReference>
<dbReference type="CDD" id="cd05312">
    <property type="entry name" value="NAD_bind_1_malic_enz"/>
    <property type="match status" value="1"/>
</dbReference>
<dbReference type="FunFam" id="3.40.50.10380:FF:000001">
    <property type="entry name" value="NAD-dependent malic enzyme"/>
    <property type="match status" value="1"/>
</dbReference>
<dbReference type="FunFam" id="3.40.50.720:FF:000055">
    <property type="entry name" value="NAD-dependent malic enzyme"/>
    <property type="match status" value="1"/>
</dbReference>
<dbReference type="Gene3D" id="3.40.50.10380">
    <property type="entry name" value="Malic enzyme, N-terminal domain"/>
    <property type="match status" value="1"/>
</dbReference>
<dbReference type="Gene3D" id="3.40.50.720">
    <property type="entry name" value="NAD(P)-binding Rossmann-like Domain"/>
    <property type="match status" value="1"/>
</dbReference>
<dbReference type="HAMAP" id="MF_01619">
    <property type="entry name" value="NAD_malic_enz"/>
    <property type="match status" value="1"/>
</dbReference>
<dbReference type="InterPro" id="IPR046346">
    <property type="entry name" value="Aminoacid_DH-like_N_sf"/>
</dbReference>
<dbReference type="InterPro" id="IPR015884">
    <property type="entry name" value="Malic_enzyme_CS"/>
</dbReference>
<dbReference type="InterPro" id="IPR012301">
    <property type="entry name" value="Malic_N_dom"/>
</dbReference>
<dbReference type="InterPro" id="IPR037062">
    <property type="entry name" value="Malic_N_dom_sf"/>
</dbReference>
<dbReference type="InterPro" id="IPR012302">
    <property type="entry name" value="Malic_NAD-bd"/>
</dbReference>
<dbReference type="InterPro" id="IPR001891">
    <property type="entry name" value="Malic_OxRdtase"/>
</dbReference>
<dbReference type="InterPro" id="IPR036291">
    <property type="entry name" value="NAD(P)-bd_dom_sf"/>
</dbReference>
<dbReference type="InterPro" id="IPR023667">
    <property type="entry name" value="NAD_malic_enz_proteobac"/>
</dbReference>
<dbReference type="NCBIfam" id="NF010052">
    <property type="entry name" value="PRK13529.1"/>
    <property type="match status" value="1"/>
</dbReference>
<dbReference type="PANTHER" id="PTHR23406">
    <property type="entry name" value="MALIC ENZYME-RELATED"/>
    <property type="match status" value="1"/>
</dbReference>
<dbReference type="PANTHER" id="PTHR23406:SF34">
    <property type="entry name" value="NAD-DEPENDENT MALIC ENZYME, MITOCHONDRIAL"/>
    <property type="match status" value="1"/>
</dbReference>
<dbReference type="Pfam" id="PF00390">
    <property type="entry name" value="malic"/>
    <property type="match status" value="1"/>
</dbReference>
<dbReference type="Pfam" id="PF03949">
    <property type="entry name" value="Malic_M"/>
    <property type="match status" value="1"/>
</dbReference>
<dbReference type="PIRSF" id="PIRSF000106">
    <property type="entry name" value="ME"/>
    <property type="match status" value="1"/>
</dbReference>
<dbReference type="PRINTS" id="PR00072">
    <property type="entry name" value="MALOXRDTASE"/>
</dbReference>
<dbReference type="SMART" id="SM01274">
    <property type="entry name" value="malic"/>
    <property type="match status" value="1"/>
</dbReference>
<dbReference type="SMART" id="SM00919">
    <property type="entry name" value="Malic_M"/>
    <property type="match status" value="1"/>
</dbReference>
<dbReference type="SUPFAM" id="SSF53223">
    <property type="entry name" value="Aminoacid dehydrogenase-like, N-terminal domain"/>
    <property type="match status" value="1"/>
</dbReference>
<dbReference type="SUPFAM" id="SSF51735">
    <property type="entry name" value="NAD(P)-binding Rossmann-fold domains"/>
    <property type="match status" value="1"/>
</dbReference>
<dbReference type="PROSITE" id="PS00331">
    <property type="entry name" value="MALIC_ENZYMES"/>
    <property type="match status" value="1"/>
</dbReference>
<name>MAO1_PSESM</name>
<gene>
    <name evidence="1" type="primary">maeA</name>
    <name type="ordered locus">PSPTO_3924</name>
</gene>